<reference key="1">
    <citation type="submission" date="2006-09" db="EMBL/GenBank/DDBJ databases">
        <authorList>
            <consortium name="The Klebsiella pneumonia Genome Sequencing Project"/>
            <person name="McClelland M."/>
            <person name="Sanderson E.K."/>
            <person name="Spieth J."/>
            <person name="Clifton W.S."/>
            <person name="Latreille P."/>
            <person name="Sabo A."/>
            <person name="Pepin K."/>
            <person name="Bhonagiri V."/>
            <person name="Porwollik S."/>
            <person name="Ali J."/>
            <person name="Wilson R.K."/>
        </authorList>
    </citation>
    <scope>NUCLEOTIDE SEQUENCE [LARGE SCALE GENOMIC DNA]</scope>
    <source>
        <strain>ATCC 700721 / MGH 78578</strain>
    </source>
</reference>
<proteinExistence type="inferred from homology"/>
<protein>
    <recommendedName>
        <fullName evidence="1">Recombination-associated protein RdgC</fullName>
    </recommendedName>
</protein>
<name>RDGC_KLEP7</name>
<accession>A6T5B7</accession>
<sequence length="303" mass="34028">MLWFKNLMVYRLSRDIELRAEEMEKQLAELTFTPCGSQDMAKTGWVSPMGSHSDALTHTANGQIIICARKEEKILPSPVIKQALEAKIQKLEADQGRKLKKTEKDSLKDEVLHSLLPRAFSRFSQTMMWIDTVNGLIMVDCASAKKAEDTLALLRKTLGSLPVVPLTLENPIELTLTEWVRSGTVAQGFQLLDEAELKAMLEDGGVIRAKKQDLVSDEIAVHIEAGKVVTKLALDWQQRIQFVICDDASIKRLKFCDELRDQNEDIDREDFAQRFDADFILMTGELAALIQSLVEGLGGEAQR</sequence>
<dbReference type="EMBL" id="CP000647">
    <property type="protein sequence ID" value="ABR75788.1"/>
    <property type="molecule type" value="Genomic_DNA"/>
</dbReference>
<dbReference type="RefSeq" id="WP_002890285.1">
    <property type="nucleotide sequence ID" value="NC_009648.1"/>
</dbReference>
<dbReference type="SMR" id="A6T5B7"/>
<dbReference type="STRING" id="272620.KPN_00336"/>
<dbReference type="jPOST" id="A6T5B7"/>
<dbReference type="PaxDb" id="272620-KPN_00336"/>
<dbReference type="EnsemblBacteria" id="ABR75788">
    <property type="protein sequence ID" value="ABR75788"/>
    <property type="gene ID" value="KPN_00336"/>
</dbReference>
<dbReference type="GeneID" id="93274766"/>
<dbReference type="KEGG" id="kpn:KPN_00336"/>
<dbReference type="HOGENOM" id="CLU_052038_1_1_6"/>
<dbReference type="Proteomes" id="UP000000265">
    <property type="component" value="Chromosome"/>
</dbReference>
<dbReference type="GO" id="GO:0043590">
    <property type="term" value="C:bacterial nucleoid"/>
    <property type="evidence" value="ECO:0007669"/>
    <property type="project" value="TreeGrafter"/>
</dbReference>
<dbReference type="GO" id="GO:0005737">
    <property type="term" value="C:cytoplasm"/>
    <property type="evidence" value="ECO:0007669"/>
    <property type="project" value="UniProtKB-UniRule"/>
</dbReference>
<dbReference type="GO" id="GO:0003690">
    <property type="term" value="F:double-stranded DNA binding"/>
    <property type="evidence" value="ECO:0007669"/>
    <property type="project" value="TreeGrafter"/>
</dbReference>
<dbReference type="GO" id="GO:0006310">
    <property type="term" value="P:DNA recombination"/>
    <property type="evidence" value="ECO:0007669"/>
    <property type="project" value="UniProtKB-UniRule"/>
</dbReference>
<dbReference type="GO" id="GO:0000018">
    <property type="term" value="P:regulation of DNA recombination"/>
    <property type="evidence" value="ECO:0007669"/>
    <property type="project" value="TreeGrafter"/>
</dbReference>
<dbReference type="HAMAP" id="MF_00194">
    <property type="entry name" value="RdgC"/>
    <property type="match status" value="1"/>
</dbReference>
<dbReference type="InterPro" id="IPR007476">
    <property type="entry name" value="RdgC"/>
</dbReference>
<dbReference type="NCBIfam" id="NF001460">
    <property type="entry name" value="PRK00321.1-1"/>
    <property type="match status" value="1"/>
</dbReference>
<dbReference type="NCBIfam" id="NF001462">
    <property type="entry name" value="PRK00321.1-3"/>
    <property type="match status" value="1"/>
</dbReference>
<dbReference type="NCBIfam" id="NF001464">
    <property type="entry name" value="PRK00321.1-5"/>
    <property type="match status" value="1"/>
</dbReference>
<dbReference type="PANTHER" id="PTHR38103">
    <property type="entry name" value="RECOMBINATION-ASSOCIATED PROTEIN RDGC"/>
    <property type="match status" value="1"/>
</dbReference>
<dbReference type="PANTHER" id="PTHR38103:SF1">
    <property type="entry name" value="RECOMBINATION-ASSOCIATED PROTEIN RDGC"/>
    <property type="match status" value="1"/>
</dbReference>
<dbReference type="Pfam" id="PF04381">
    <property type="entry name" value="RdgC"/>
    <property type="match status" value="1"/>
</dbReference>
<gene>
    <name evidence="1" type="primary">rdgC</name>
    <name type="ordered locus">KPN78578_03270</name>
    <name type="ORF">KPN_00336</name>
</gene>
<organism>
    <name type="scientific">Klebsiella pneumoniae subsp. pneumoniae (strain ATCC 700721 / MGH 78578)</name>
    <dbReference type="NCBI Taxonomy" id="272620"/>
    <lineage>
        <taxon>Bacteria</taxon>
        <taxon>Pseudomonadati</taxon>
        <taxon>Pseudomonadota</taxon>
        <taxon>Gammaproteobacteria</taxon>
        <taxon>Enterobacterales</taxon>
        <taxon>Enterobacteriaceae</taxon>
        <taxon>Klebsiella/Raoultella group</taxon>
        <taxon>Klebsiella</taxon>
        <taxon>Klebsiella pneumoniae complex</taxon>
    </lineage>
</organism>
<feature type="chain" id="PRO_1000021211" description="Recombination-associated protein RdgC">
    <location>
        <begin position="1"/>
        <end position="303"/>
    </location>
</feature>
<keyword id="KW-0963">Cytoplasm</keyword>
<keyword id="KW-0233">DNA recombination</keyword>
<evidence type="ECO:0000255" key="1">
    <source>
        <dbReference type="HAMAP-Rule" id="MF_00194"/>
    </source>
</evidence>
<comment type="function">
    <text evidence="1">May be involved in recombination.</text>
</comment>
<comment type="subcellular location">
    <subcellularLocation>
        <location evidence="1">Cytoplasm</location>
        <location evidence="1">Nucleoid</location>
    </subcellularLocation>
</comment>
<comment type="similarity">
    <text evidence="1">Belongs to the RdgC family.</text>
</comment>